<protein>
    <recommendedName>
        <fullName evidence="1">DNA ligase B</fullName>
        <ecNumber evidence="1">6.5.1.2</ecNumber>
    </recommendedName>
    <alternativeName>
        <fullName evidence="1">Polydeoxyribonucleotide synthase [NAD(+)] B</fullName>
    </alternativeName>
</protein>
<dbReference type="EC" id="6.5.1.2" evidence="1"/>
<dbReference type="EMBL" id="CP000712">
    <property type="protein sequence ID" value="ABQ80961.1"/>
    <property type="molecule type" value="Genomic_DNA"/>
</dbReference>
<dbReference type="SMR" id="A5WA01"/>
<dbReference type="KEGG" id="ppf:Pput_4841"/>
<dbReference type="eggNOG" id="COG0272">
    <property type="taxonomic scope" value="Bacteria"/>
</dbReference>
<dbReference type="HOGENOM" id="CLU_489786_0_0_6"/>
<dbReference type="GO" id="GO:0003911">
    <property type="term" value="F:DNA ligase (NAD+) activity"/>
    <property type="evidence" value="ECO:0007669"/>
    <property type="project" value="UniProtKB-UniRule"/>
</dbReference>
<dbReference type="GO" id="GO:0006281">
    <property type="term" value="P:DNA repair"/>
    <property type="evidence" value="ECO:0007669"/>
    <property type="project" value="UniProtKB-KW"/>
</dbReference>
<dbReference type="GO" id="GO:0006260">
    <property type="term" value="P:DNA replication"/>
    <property type="evidence" value="ECO:0007669"/>
    <property type="project" value="UniProtKB-KW"/>
</dbReference>
<dbReference type="Gene3D" id="1.10.150.20">
    <property type="entry name" value="5' to 3' exonuclease, C-terminal subdomain"/>
    <property type="match status" value="1"/>
</dbReference>
<dbReference type="Gene3D" id="3.30.470.30">
    <property type="entry name" value="DNA ligase/mRNA capping enzyme"/>
    <property type="match status" value="1"/>
</dbReference>
<dbReference type="Gene3D" id="1.10.287.610">
    <property type="entry name" value="Helix hairpin bin"/>
    <property type="match status" value="1"/>
</dbReference>
<dbReference type="Gene3D" id="2.40.50.140">
    <property type="entry name" value="Nucleic acid-binding proteins"/>
    <property type="match status" value="1"/>
</dbReference>
<dbReference type="HAMAP" id="MF_01587">
    <property type="entry name" value="DNA_ligase_B"/>
    <property type="match status" value="1"/>
</dbReference>
<dbReference type="InterPro" id="IPR001679">
    <property type="entry name" value="DNA_ligase"/>
</dbReference>
<dbReference type="InterPro" id="IPR020923">
    <property type="entry name" value="DNA_ligase_B"/>
</dbReference>
<dbReference type="InterPro" id="IPR033136">
    <property type="entry name" value="DNA_ligase_CS"/>
</dbReference>
<dbReference type="InterPro" id="IPR013839">
    <property type="entry name" value="DNAligase_adenylation"/>
</dbReference>
<dbReference type="InterPro" id="IPR013840">
    <property type="entry name" value="DNAligase_N"/>
</dbReference>
<dbReference type="InterPro" id="IPR012340">
    <property type="entry name" value="NA-bd_OB-fold"/>
</dbReference>
<dbReference type="InterPro" id="IPR050326">
    <property type="entry name" value="NAD_dep_DNA_ligaseB"/>
</dbReference>
<dbReference type="InterPro" id="IPR004150">
    <property type="entry name" value="NAD_DNA_ligase_OB"/>
</dbReference>
<dbReference type="InterPro" id="IPR010994">
    <property type="entry name" value="RuvA_2-like"/>
</dbReference>
<dbReference type="NCBIfam" id="NF005987">
    <property type="entry name" value="PRK08097.1"/>
    <property type="match status" value="1"/>
</dbReference>
<dbReference type="PANTHER" id="PTHR47810">
    <property type="entry name" value="DNA LIGASE"/>
    <property type="match status" value="1"/>
</dbReference>
<dbReference type="PANTHER" id="PTHR47810:SF1">
    <property type="entry name" value="DNA LIGASE B"/>
    <property type="match status" value="1"/>
</dbReference>
<dbReference type="Pfam" id="PF01653">
    <property type="entry name" value="DNA_ligase_aden"/>
    <property type="match status" value="1"/>
</dbReference>
<dbReference type="Pfam" id="PF03120">
    <property type="entry name" value="DNA_ligase_OB"/>
    <property type="match status" value="1"/>
</dbReference>
<dbReference type="PIRSF" id="PIRSF001604">
    <property type="entry name" value="LigA"/>
    <property type="match status" value="1"/>
</dbReference>
<dbReference type="SMART" id="SM00532">
    <property type="entry name" value="LIGANc"/>
    <property type="match status" value="1"/>
</dbReference>
<dbReference type="SUPFAM" id="SSF56091">
    <property type="entry name" value="DNA ligase/mRNA capping enzyme, catalytic domain"/>
    <property type="match status" value="1"/>
</dbReference>
<dbReference type="SUPFAM" id="SSF50249">
    <property type="entry name" value="Nucleic acid-binding proteins"/>
    <property type="match status" value="1"/>
</dbReference>
<dbReference type="SUPFAM" id="SSF47781">
    <property type="entry name" value="RuvA domain 2-like"/>
    <property type="match status" value="1"/>
</dbReference>
<dbReference type="PROSITE" id="PS01056">
    <property type="entry name" value="DNA_LIGASE_N2"/>
    <property type="match status" value="1"/>
</dbReference>
<evidence type="ECO:0000255" key="1">
    <source>
        <dbReference type="HAMAP-Rule" id="MF_01587"/>
    </source>
</evidence>
<organism>
    <name type="scientific">Pseudomonas putida (strain ATCC 700007 / DSM 6899 / JCM 31910 / BCRC 17059 / LMG 24140 / F1)</name>
    <dbReference type="NCBI Taxonomy" id="351746"/>
    <lineage>
        <taxon>Bacteria</taxon>
        <taxon>Pseudomonadati</taxon>
        <taxon>Pseudomonadota</taxon>
        <taxon>Gammaproteobacteria</taxon>
        <taxon>Pseudomonadales</taxon>
        <taxon>Pseudomonadaceae</taxon>
        <taxon>Pseudomonas</taxon>
    </lineage>
</organism>
<reference key="1">
    <citation type="submission" date="2007-05" db="EMBL/GenBank/DDBJ databases">
        <title>Complete sequence of Pseudomonas putida F1.</title>
        <authorList>
            <consortium name="US DOE Joint Genome Institute"/>
            <person name="Copeland A."/>
            <person name="Lucas S."/>
            <person name="Lapidus A."/>
            <person name="Barry K."/>
            <person name="Detter J.C."/>
            <person name="Glavina del Rio T."/>
            <person name="Hammon N."/>
            <person name="Israni S."/>
            <person name="Dalin E."/>
            <person name="Tice H."/>
            <person name="Pitluck S."/>
            <person name="Chain P."/>
            <person name="Malfatti S."/>
            <person name="Shin M."/>
            <person name="Vergez L."/>
            <person name="Schmutz J."/>
            <person name="Larimer F."/>
            <person name="Land M."/>
            <person name="Hauser L."/>
            <person name="Kyrpides N."/>
            <person name="Lykidis A."/>
            <person name="Parales R."/>
            <person name="Richardson P."/>
        </authorList>
    </citation>
    <scope>NUCLEOTIDE SEQUENCE [LARGE SCALE GENOMIC DNA]</scope>
    <source>
        <strain>ATCC 700007 / DSM 6899 / JCM 31910 / BCRC 17059 / LMG 24140 / F1</strain>
    </source>
</reference>
<keyword id="KW-0227">DNA damage</keyword>
<keyword id="KW-0234">DNA repair</keyword>
<keyword id="KW-0235">DNA replication</keyword>
<keyword id="KW-0436">Ligase</keyword>
<keyword id="KW-0520">NAD</keyword>
<gene>
    <name evidence="1" type="primary">ligB</name>
    <name type="ordered locus">Pput_4841</name>
</gene>
<comment type="function">
    <text evidence="1">Catalyzes the formation of phosphodiester linkages between 5'-phosphoryl and 3'-hydroxyl groups in double-stranded DNA using NAD as a coenzyme and as the energy source for the reaction.</text>
</comment>
<comment type="catalytic activity">
    <reaction evidence="1">
        <text>NAD(+) + (deoxyribonucleotide)n-3'-hydroxyl + 5'-phospho-(deoxyribonucleotide)m = (deoxyribonucleotide)n+m + AMP + beta-nicotinamide D-nucleotide.</text>
        <dbReference type="EC" id="6.5.1.2"/>
    </reaction>
</comment>
<comment type="similarity">
    <text evidence="1">Belongs to the NAD-dependent DNA ligase family. LigB subfamily.</text>
</comment>
<feature type="chain" id="PRO_0000381952" description="DNA ligase B">
    <location>
        <begin position="1"/>
        <end position="566"/>
    </location>
</feature>
<feature type="active site" description="N6-AMP-lysine intermediate" evidence="1">
    <location>
        <position position="125"/>
    </location>
</feature>
<sequence>MPYLLLFALLFALNAPLARAASCPQWSPQQAKAEVAQLRATLARWDEHYHRQGIALVADELYDQSRERLNHLQQCFAVGTSPSPLASARGPVPHPVPHTGVDKLADRQAVARWMAGKSGVWVQPKVDGVAVSLTYQQGRLVQLTSRGDGVNGHDWSRHIPQLDAVTRQLPEALDLHLQGELYLRLSDHVQAKAGSANARGTVAGLLARKQLTGAQGNAIGLFVWGWPHGPEQQAERLAQLARLGFPDSQLYSIAIDTLEDAAHWREHWYRSALPFATDGVILRQSSRPPAERWQAKAPYWIAAWKYPYAQALAEVRDVRFRVGRTGRVTPVLHLLPVTLDDRRITQVSLGSLARWHTLDIRPGDQVAISLAGLTIPRLEQVVHRTVERQAVAAPAPDRYHAHSCWQASEGCDEQFIARLTWLGGKQGLALPRTGPGTWRRLVEAGLVTSMTDWLQLDAERLQQAPGISRLTAAHLLGSFDEARSRPFDQWLRALGVPIGKHLPLTGDWQALASRSAGHWQTVPGIGAKRSRQLVEFFAASEVQAIAAQLAETGIEGFRPPPQRIEQ</sequence>
<name>LIGB_PSEP1</name>
<accession>A5WA01</accession>
<proteinExistence type="inferred from homology"/>